<accession>Q5HGC9</accession>
<sequence length="311" mass="35868">MNKNKPFIVVIVGPTASGKTELSIELAKRINGEIISGDSMQVYKHMNIGTAKVTPEEMDGIPHHLIDILNPDDTFSAYEFKRLAEDLITDITNRGKVPIIAGGTGLYIQSLIYNYELEDETVTPAQLSIVKQKLSALEHLDNQQLHDYLAQFDAVSAENIHPNNRQRVLRAIEYYLKTKKLLSNRKKVQQFTENYDTLLLGIEMSRKTLYSRINKRVDIMLDHGLFREVQQLVEQGYESCQSMQAIGYKELIPVINGQMIYEDAVNDLKQHSRQYAKRQMTWFKNKMSVHWLDKENMSLQMMLDEITTQIK</sequence>
<protein>
    <recommendedName>
        <fullName evidence="1">tRNA dimethylallyltransferase</fullName>
        <ecNumber evidence="1">2.5.1.75</ecNumber>
    </recommendedName>
    <alternativeName>
        <fullName evidence="1">Dimethylallyl diphosphate:tRNA dimethylallyltransferase</fullName>
        <shortName evidence="1">DMAPP:tRNA dimethylallyltransferase</shortName>
        <shortName evidence="1">DMATase</shortName>
    </alternativeName>
    <alternativeName>
        <fullName evidence="1">Isopentenyl-diphosphate:tRNA isopentenyltransferase</fullName>
        <shortName evidence="1">IPP transferase</shortName>
        <shortName evidence="1">IPPT</shortName>
        <shortName evidence="1">IPTase</shortName>
    </alternativeName>
</protein>
<proteinExistence type="inferred from homology"/>
<dbReference type="EC" id="2.5.1.75" evidence="1"/>
<dbReference type="EMBL" id="CP000046">
    <property type="protein sequence ID" value="AAW38152.1"/>
    <property type="molecule type" value="Genomic_DNA"/>
</dbReference>
<dbReference type="RefSeq" id="WP_001548613.1">
    <property type="nucleotide sequence ID" value="NZ_JBGOFO010000002.1"/>
</dbReference>
<dbReference type="SMR" id="Q5HGC9"/>
<dbReference type="KEGG" id="sac:SACOL1323"/>
<dbReference type="HOGENOM" id="CLU_032616_0_1_9"/>
<dbReference type="Proteomes" id="UP000000530">
    <property type="component" value="Chromosome"/>
</dbReference>
<dbReference type="GO" id="GO:0005524">
    <property type="term" value="F:ATP binding"/>
    <property type="evidence" value="ECO:0007669"/>
    <property type="project" value="UniProtKB-UniRule"/>
</dbReference>
<dbReference type="GO" id="GO:0052381">
    <property type="term" value="F:tRNA dimethylallyltransferase activity"/>
    <property type="evidence" value="ECO:0007669"/>
    <property type="project" value="UniProtKB-UniRule"/>
</dbReference>
<dbReference type="GO" id="GO:0006400">
    <property type="term" value="P:tRNA modification"/>
    <property type="evidence" value="ECO:0007669"/>
    <property type="project" value="TreeGrafter"/>
</dbReference>
<dbReference type="FunFam" id="1.10.20.140:FF:000004">
    <property type="entry name" value="tRNA dimethylallyltransferase"/>
    <property type="match status" value="1"/>
</dbReference>
<dbReference type="Gene3D" id="1.10.20.140">
    <property type="match status" value="1"/>
</dbReference>
<dbReference type="Gene3D" id="3.40.50.300">
    <property type="entry name" value="P-loop containing nucleotide triphosphate hydrolases"/>
    <property type="match status" value="1"/>
</dbReference>
<dbReference type="HAMAP" id="MF_00185">
    <property type="entry name" value="IPP_trans"/>
    <property type="match status" value="1"/>
</dbReference>
<dbReference type="InterPro" id="IPR039657">
    <property type="entry name" value="Dimethylallyltransferase"/>
</dbReference>
<dbReference type="InterPro" id="IPR018022">
    <property type="entry name" value="IPT"/>
</dbReference>
<dbReference type="InterPro" id="IPR027417">
    <property type="entry name" value="P-loop_NTPase"/>
</dbReference>
<dbReference type="NCBIfam" id="TIGR00174">
    <property type="entry name" value="miaA"/>
    <property type="match status" value="1"/>
</dbReference>
<dbReference type="PANTHER" id="PTHR11088">
    <property type="entry name" value="TRNA DIMETHYLALLYLTRANSFERASE"/>
    <property type="match status" value="1"/>
</dbReference>
<dbReference type="PANTHER" id="PTHR11088:SF60">
    <property type="entry name" value="TRNA DIMETHYLALLYLTRANSFERASE"/>
    <property type="match status" value="1"/>
</dbReference>
<dbReference type="Pfam" id="PF01715">
    <property type="entry name" value="IPPT"/>
    <property type="match status" value="1"/>
</dbReference>
<dbReference type="SUPFAM" id="SSF52540">
    <property type="entry name" value="P-loop containing nucleoside triphosphate hydrolases"/>
    <property type="match status" value="2"/>
</dbReference>
<feature type="chain" id="PRO_0000163972" description="tRNA dimethylallyltransferase">
    <location>
        <begin position="1"/>
        <end position="311"/>
    </location>
</feature>
<feature type="region of interest" description="Interaction with substrate tRNA" evidence="1">
    <location>
        <begin position="38"/>
        <end position="41"/>
    </location>
</feature>
<feature type="region of interest" description="Interaction with substrate tRNA" evidence="1">
    <location>
        <begin position="166"/>
        <end position="170"/>
    </location>
</feature>
<feature type="binding site" evidence="1">
    <location>
        <begin position="13"/>
        <end position="20"/>
    </location>
    <ligand>
        <name>ATP</name>
        <dbReference type="ChEBI" id="CHEBI:30616"/>
    </ligand>
</feature>
<feature type="binding site" evidence="1">
    <location>
        <begin position="15"/>
        <end position="20"/>
    </location>
    <ligand>
        <name>substrate</name>
    </ligand>
</feature>
<feature type="site" description="Interaction with substrate tRNA" evidence="1">
    <location>
        <position position="104"/>
    </location>
</feature>
<gene>
    <name evidence="1" type="primary">miaA</name>
    <name type="ordered locus">SACOL1323</name>
</gene>
<name>MIAA_STAAC</name>
<keyword id="KW-0067">ATP-binding</keyword>
<keyword id="KW-0460">Magnesium</keyword>
<keyword id="KW-0547">Nucleotide-binding</keyword>
<keyword id="KW-0808">Transferase</keyword>
<keyword id="KW-0819">tRNA processing</keyword>
<organism>
    <name type="scientific">Staphylococcus aureus (strain COL)</name>
    <dbReference type="NCBI Taxonomy" id="93062"/>
    <lineage>
        <taxon>Bacteria</taxon>
        <taxon>Bacillati</taxon>
        <taxon>Bacillota</taxon>
        <taxon>Bacilli</taxon>
        <taxon>Bacillales</taxon>
        <taxon>Staphylococcaceae</taxon>
        <taxon>Staphylococcus</taxon>
    </lineage>
</organism>
<comment type="function">
    <text evidence="1">Catalyzes the transfer of a dimethylallyl group onto the adenine at position 37 in tRNAs that read codons beginning with uridine, leading to the formation of N6-(dimethylallyl)adenosine (i(6)A).</text>
</comment>
<comment type="catalytic activity">
    <reaction evidence="1">
        <text>adenosine(37) in tRNA + dimethylallyl diphosphate = N(6)-dimethylallyladenosine(37) in tRNA + diphosphate</text>
        <dbReference type="Rhea" id="RHEA:26482"/>
        <dbReference type="Rhea" id="RHEA-COMP:10162"/>
        <dbReference type="Rhea" id="RHEA-COMP:10375"/>
        <dbReference type="ChEBI" id="CHEBI:33019"/>
        <dbReference type="ChEBI" id="CHEBI:57623"/>
        <dbReference type="ChEBI" id="CHEBI:74411"/>
        <dbReference type="ChEBI" id="CHEBI:74415"/>
        <dbReference type="EC" id="2.5.1.75"/>
    </reaction>
</comment>
<comment type="cofactor">
    <cofactor evidence="1">
        <name>Mg(2+)</name>
        <dbReference type="ChEBI" id="CHEBI:18420"/>
    </cofactor>
</comment>
<comment type="subunit">
    <text evidence="1">Monomer.</text>
</comment>
<comment type="similarity">
    <text evidence="1">Belongs to the IPP transferase family.</text>
</comment>
<reference key="1">
    <citation type="journal article" date="2005" name="J. Bacteriol.">
        <title>Insights on evolution of virulence and resistance from the complete genome analysis of an early methicillin-resistant Staphylococcus aureus strain and a biofilm-producing methicillin-resistant Staphylococcus epidermidis strain.</title>
        <authorList>
            <person name="Gill S.R."/>
            <person name="Fouts D.E."/>
            <person name="Archer G.L."/>
            <person name="Mongodin E.F."/>
            <person name="DeBoy R.T."/>
            <person name="Ravel J."/>
            <person name="Paulsen I.T."/>
            <person name="Kolonay J.F."/>
            <person name="Brinkac L.M."/>
            <person name="Beanan M.J."/>
            <person name="Dodson R.J."/>
            <person name="Daugherty S.C."/>
            <person name="Madupu R."/>
            <person name="Angiuoli S.V."/>
            <person name="Durkin A.S."/>
            <person name="Haft D.H."/>
            <person name="Vamathevan J.J."/>
            <person name="Khouri H."/>
            <person name="Utterback T.R."/>
            <person name="Lee C."/>
            <person name="Dimitrov G."/>
            <person name="Jiang L."/>
            <person name="Qin H."/>
            <person name="Weidman J."/>
            <person name="Tran K."/>
            <person name="Kang K.H."/>
            <person name="Hance I.R."/>
            <person name="Nelson K.E."/>
            <person name="Fraser C.M."/>
        </authorList>
    </citation>
    <scope>NUCLEOTIDE SEQUENCE [LARGE SCALE GENOMIC DNA]</scope>
    <source>
        <strain>COL</strain>
    </source>
</reference>
<evidence type="ECO:0000255" key="1">
    <source>
        <dbReference type="HAMAP-Rule" id="MF_00185"/>
    </source>
</evidence>